<reference key="1">
    <citation type="journal article" date="2006" name="Biochemistry">
        <title>A novel conotoxin inhibitor of Kv1.6 channel and nAChR subtypes defines a new superfamily of conotoxins.</title>
        <authorList>
            <person name="Imperial J.S."/>
            <person name="Bansal P.S."/>
            <person name="Alewood P.F."/>
            <person name="Daly N.L."/>
            <person name="Craik D.J."/>
            <person name="Sporning A."/>
            <person name="Terlau H."/>
            <person name="Lopez-Vera E."/>
            <person name="Bandyopadhyay P.K."/>
            <person name="Olivera B.M."/>
        </authorList>
    </citation>
    <scope>NUCLEOTIDE SEQUENCE [MRNA]</scope>
    <source>
        <tissue>Venom duct</tissue>
    </source>
</reference>
<comment type="function">
    <text evidence="2">Highly inhibits both nicotinic acetylcholine receptors (neuronal (alpha-3/beta-4) and muscular (alpha-1/beta-1/epsilon/delta) subtypes) and the voltage-gated potassium channel Kv1.6/KCNA6 subtype.</text>
</comment>
<comment type="subcellular location">
    <subcellularLocation>
        <location evidence="6">Secreted</location>
    </subcellularLocation>
</comment>
<comment type="tissue specificity">
    <text evidence="6">Expressed by the venom duct.</text>
</comment>
<comment type="domain">
    <text evidence="5">The cysteine framework is XIV (C-C-C-C).</text>
</comment>
<comment type="similarity">
    <text evidence="5">Belongs to the conotoxin J superfamily.</text>
</comment>
<evidence type="ECO:0000250" key="1"/>
<evidence type="ECO:0000250" key="2">
    <source>
        <dbReference type="UniProtKB" id="Q0N4U8"/>
    </source>
</evidence>
<evidence type="ECO:0000255" key="3"/>
<evidence type="ECO:0000303" key="4">
    <source>
    </source>
</evidence>
<evidence type="ECO:0000305" key="5"/>
<evidence type="ECO:0000305" key="6">
    <source>
    </source>
</evidence>
<feature type="signal peptide" evidence="3">
    <location>
        <begin position="1"/>
        <end position="24"/>
    </location>
</feature>
<feature type="propeptide" id="PRO_0000260018" evidence="1">
    <location>
        <begin position="25"/>
        <end position="39"/>
    </location>
</feature>
<feature type="peptide" id="PRO_0000260019" description="Alpha/kappa-conotoxin-like fe14.1" evidence="6">
    <location>
        <begin position="40"/>
        <end position="64"/>
    </location>
</feature>
<feature type="propeptide" id="PRO_0000260020" evidence="1">
    <location>
        <begin position="65"/>
        <end position="76"/>
    </location>
</feature>
<feature type="modified residue" description="Arginine amide" evidence="2">
    <location>
        <position position="64"/>
    </location>
</feature>
<feature type="disulfide bond" evidence="2">
    <location>
        <begin position="46"/>
        <end position="61"/>
    </location>
</feature>
<feature type="disulfide bond" evidence="2">
    <location>
        <begin position="50"/>
        <end position="63"/>
    </location>
</feature>
<proteinExistence type="inferred from homology"/>
<accession>Q0N4U4</accession>
<protein>
    <recommendedName>
        <fullName evidence="4 5">Alpha/kappa-conotoxin-like fe14.1</fullName>
    </recommendedName>
</protein>
<sequence length="76" mass="8108">MPSVRSVTCCCLLWMMLSVQLVTPGSPGTAQLSGHRTARSPGSTICKMACRTGNGHKYPFCNCRGKRDVVSSSMAV</sequence>
<name>CJE1_CONFR</name>
<keyword id="KW-0008">Acetylcholine receptor inhibiting toxin</keyword>
<keyword id="KW-0027">Amidation</keyword>
<keyword id="KW-1015">Disulfide bond</keyword>
<keyword id="KW-0872">Ion channel impairing toxin</keyword>
<keyword id="KW-0528">Neurotoxin</keyword>
<keyword id="KW-0629">Postsynaptic neurotoxin</keyword>
<keyword id="KW-0632">Potassium channel impairing toxin</keyword>
<keyword id="KW-0964">Secreted</keyword>
<keyword id="KW-0732">Signal</keyword>
<keyword id="KW-0800">Toxin</keyword>
<keyword id="KW-1220">Voltage-gated potassium channel impairing toxin</keyword>
<organism>
    <name type="scientific">Conus ferrugineus</name>
    <name type="common">Cone snail</name>
    <dbReference type="NCBI Taxonomy" id="379542"/>
    <lineage>
        <taxon>Eukaryota</taxon>
        <taxon>Metazoa</taxon>
        <taxon>Spiralia</taxon>
        <taxon>Lophotrochozoa</taxon>
        <taxon>Mollusca</taxon>
        <taxon>Gastropoda</taxon>
        <taxon>Caenogastropoda</taxon>
        <taxon>Neogastropoda</taxon>
        <taxon>Conoidea</taxon>
        <taxon>Conidae</taxon>
        <taxon>Conus</taxon>
        <taxon>Strategoconus</taxon>
    </lineage>
</organism>
<dbReference type="EMBL" id="DQ447644">
    <property type="protein sequence ID" value="ABE27010.1"/>
    <property type="molecule type" value="mRNA"/>
</dbReference>
<dbReference type="SMR" id="Q0N4U4"/>
<dbReference type="TCDB" id="8.B.38.1.2">
    <property type="family name" value="the conotoxin j (ctx j) family"/>
</dbReference>
<dbReference type="ConoServer" id="1186">
    <property type="toxin name" value="Fe14.1 precursor"/>
</dbReference>
<dbReference type="GO" id="GO:0005576">
    <property type="term" value="C:extracellular region"/>
    <property type="evidence" value="ECO:0007669"/>
    <property type="project" value="UniProtKB-SubCell"/>
</dbReference>
<dbReference type="GO" id="GO:0035792">
    <property type="term" value="C:host cell postsynaptic membrane"/>
    <property type="evidence" value="ECO:0007669"/>
    <property type="project" value="UniProtKB-KW"/>
</dbReference>
<dbReference type="GO" id="GO:0030550">
    <property type="term" value="F:acetylcholine receptor inhibitor activity"/>
    <property type="evidence" value="ECO:0007669"/>
    <property type="project" value="UniProtKB-KW"/>
</dbReference>
<dbReference type="GO" id="GO:0015459">
    <property type="term" value="F:potassium channel regulator activity"/>
    <property type="evidence" value="ECO:0007669"/>
    <property type="project" value="UniProtKB-KW"/>
</dbReference>
<dbReference type="GO" id="GO:0090729">
    <property type="term" value="F:toxin activity"/>
    <property type="evidence" value="ECO:0007669"/>
    <property type="project" value="UniProtKB-KW"/>
</dbReference>